<comment type="function">
    <text evidence="1">Component of ribonuclease P, a ribonucleoprotein complex that generates mature tRNA molecules by cleaving their 5'-ends (By similarity). Also a component of the MRP ribonuclease complex, which cleaves pre-rRNA sequences (By similarity).</text>
</comment>
<comment type="catalytic activity">
    <reaction evidence="1">
        <text>Endonucleolytic cleavage of RNA, removing 5'-extranucleotides from tRNA precursor.</text>
        <dbReference type="EC" id="3.1.26.5"/>
    </reaction>
</comment>
<comment type="subunit">
    <text evidence="1">Component of nuclear RNase P and RNase MRP ribonucleoproteins (By similarity). Several subunits of RNase P are also part of the RNase MRP complex (By similarity).</text>
</comment>
<comment type="subcellular location">
    <subcellularLocation>
        <location evidence="1">Nucleus</location>
        <location evidence="1">Nucleolus</location>
    </subcellularLocation>
</comment>
<gene>
    <name evidence="4" type="primary">popl-1</name>
    <name evidence="4" type="ORF">C05D11.9</name>
</gene>
<feature type="chain" id="PRO_0000065150" description="Ribonucleases P/MRP protein subunit popl-1">
    <location>
        <begin position="1"/>
        <end position="752"/>
    </location>
</feature>
<feature type="region of interest" description="Disordered" evidence="2">
    <location>
        <begin position="638"/>
        <end position="663"/>
    </location>
</feature>
<feature type="compositionally biased region" description="Basic residues" evidence="2">
    <location>
        <begin position="640"/>
        <end position="657"/>
    </location>
</feature>
<name>POPL1_CAEEL</name>
<proteinExistence type="inferred from homology"/>
<reference key="1">
    <citation type="journal article" date="1998" name="Science">
        <title>Genome sequence of the nematode C. elegans: a platform for investigating biology.</title>
        <authorList>
            <consortium name="The C. elegans sequencing consortium"/>
        </authorList>
    </citation>
    <scope>NUCLEOTIDE SEQUENCE [LARGE SCALE GENOMIC DNA]</scope>
    <source>
        <strain>Bristol N2</strain>
    </source>
</reference>
<sequence>MFIEVEKFVEARTNSIAQLLKAIDNDALVSGEVTKGPRTAAQRLPRHMRRRAMAYDIRRFPRTMREFAAAHLISKHAKKCPSRFARRKSANSRTKFGRSTSTKGIWLSTHVWHAKRFRMIQKWGFKLADRSFQRGFRAVLRDSNKNCVIRDRSYYTCVTIQCTDAYSKISQFSQKGCRGQSSRDEEEECHQLYMPGKYPFGYIGPARFQRLSGDKVHIWIHPSSKLQFMKALLEYYNLEKQENTEEDLYKNSEIKVSIDAENICRFHLSGPKCLSKLRDSIRFVNDEKFSSEHNYFLSVSDSVFQSSRDGEVINLLIEDPRTTWDRKTVLKHKKVNKEADNERIRVSKFWNKEFREMAIEKRMADSEFHKQNSSKINGVISTEAKVPIILIIRNEGLKALDGADILIPEPFAKDFWVSLQRRGVRASGLRDEYAAHLESKALYYPLDDVGSEAGRESELAMKKELIEKYLGKPHNRRCKHWSAVSVKYPFEFKWDELSQDWNLSNKPRSEAFVCRDLQKLRIIEEAMKKGSGLEEFQEPGMLIPVKLQFFGRGRPKKYGMVCLPTDDDLISIRKNRNREIIQTPPEASSQDSDIVEAMEIEEITVKKNQGFMSLEAAASEKPINLKLLFEETTKLDDKTTKRKRVNRKKRESKKRRKIEQEKRKEEAEVEEVQKLATKYRFSANREIIGRLVAGEQSVLAGHGVGIGYICANTLSLIASNYHKSKTVVMVRNSTSKYYHPAYVTILKNATKI</sequence>
<protein>
    <recommendedName>
        <fullName evidence="3">Ribonucleases P/MRP protein subunit popl-1</fullName>
        <ecNumber evidence="1">3.1.26.5</ecNumber>
    </recommendedName>
</protein>
<dbReference type="EC" id="3.1.26.5" evidence="1"/>
<dbReference type="EMBL" id="BX284603">
    <property type="protein sequence ID" value="CCD63199.1"/>
    <property type="molecule type" value="Genomic_DNA"/>
</dbReference>
<dbReference type="PIR" id="E88482">
    <property type="entry name" value="E88482"/>
</dbReference>
<dbReference type="RefSeq" id="NP_498408.1">
    <property type="nucleotide sequence ID" value="NM_066007.7"/>
</dbReference>
<dbReference type="SMR" id="Q11188"/>
<dbReference type="FunCoup" id="Q11188">
    <property type="interactions" value="2448"/>
</dbReference>
<dbReference type="STRING" id="6239.C05D11.9.1"/>
<dbReference type="PaxDb" id="6239-C05D11.9"/>
<dbReference type="PeptideAtlas" id="Q11188"/>
<dbReference type="EnsemblMetazoa" id="C05D11.9.1">
    <property type="protein sequence ID" value="C05D11.9.1"/>
    <property type="gene ID" value="WBGene00015486"/>
</dbReference>
<dbReference type="GeneID" id="175911"/>
<dbReference type="KEGG" id="cel:CELE_C05D11.9"/>
<dbReference type="UCSC" id="C05D11.9">
    <property type="organism name" value="c. elegans"/>
</dbReference>
<dbReference type="AGR" id="WB:WBGene00015486"/>
<dbReference type="CTD" id="175911"/>
<dbReference type="WormBase" id="C05D11.9">
    <property type="protein sequence ID" value="CE24787"/>
    <property type="gene ID" value="WBGene00015486"/>
    <property type="gene designation" value="popl-1"/>
</dbReference>
<dbReference type="eggNOG" id="KOG3322">
    <property type="taxonomic scope" value="Eukaryota"/>
</dbReference>
<dbReference type="GeneTree" id="ENSGT00390000017478"/>
<dbReference type="HOGENOM" id="CLU_007205_1_1_1"/>
<dbReference type="InParanoid" id="Q11188"/>
<dbReference type="OMA" id="RRTMSHN"/>
<dbReference type="OrthoDB" id="442863at2759"/>
<dbReference type="PhylomeDB" id="Q11188"/>
<dbReference type="PRO" id="PR:Q11188"/>
<dbReference type="Proteomes" id="UP000001940">
    <property type="component" value="Chromosome III"/>
</dbReference>
<dbReference type="Bgee" id="WBGene00015486">
    <property type="expression patterns" value="Expressed in germ line (C elegans) and 4 other cell types or tissues"/>
</dbReference>
<dbReference type="GO" id="GO:0005655">
    <property type="term" value="C:nucleolar ribonuclease P complex"/>
    <property type="evidence" value="ECO:0000318"/>
    <property type="project" value="GO_Central"/>
</dbReference>
<dbReference type="GO" id="GO:0000172">
    <property type="term" value="C:ribonuclease MRP complex"/>
    <property type="evidence" value="ECO:0000318"/>
    <property type="project" value="GO_Central"/>
</dbReference>
<dbReference type="GO" id="GO:0016787">
    <property type="term" value="F:hydrolase activity"/>
    <property type="evidence" value="ECO:0007669"/>
    <property type="project" value="UniProtKB-KW"/>
</dbReference>
<dbReference type="GO" id="GO:0003723">
    <property type="term" value="F:RNA binding"/>
    <property type="evidence" value="ECO:0007669"/>
    <property type="project" value="UniProtKB-KW"/>
</dbReference>
<dbReference type="GO" id="GO:0001682">
    <property type="term" value="P:tRNA 5'-leader removal"/>
    <property type="evidence" value="ECO:0007669"/>
    <property type="project" value="InterPro"/>
</dbReference>
<dbReference type="GO" id="GO:0008033">
    <property type="term" value="P:tRNA processing"/>
    <property type="evidence" value="ECO:0000318"/>
    <property type="project" value="GO_Central"/>
</dbReference>
<dbReference type="InterPro" id="IPR039182">
    <property type="entry name" value="Pop1"/>
</dbReference>
<dbReference type="InterPro" id="IPR055079">
    <property type="entry name" value="POP1_C"/>
</dbReference>
<dbReference type="InterPro" id="IPR009723">
    <property type="entry name" value="Pop1_N"/>
</dbReference>
<dbReference type="InterPro" id="IPR012590">
    <property type="entry name" value="POPLD_dom"/>
</dbReference>
<dbReference type="PANTHER" id="PTHR22731">
    <property type="entry name" value="RIBONUCLEASES P/MRP PROTEIN SUBUNIT POP1"/>
    <property type="match status" value="1"/>
</dbReference>
<dbReference type="PANTHER" id="PTHR22731:SF3">
    <property type="entry name" value="RIBONUCLEASES P_MRP PROTEIN SUBUNIT POP1"/>
    <property type="match status" value="1"/>
</dbReference>
<dbReference type="Pfam" id="PF22770">
    <property type="entry name" value="POP1_C"/>
    <property type="match status" value="1"/>
</dbReference>
<dbReference type="Pfam" id="PF06978">
    <property type="entry name" value="POP1_N"/>
    <property type="match status" value="2"/>
</dbReference>
<dbReference type="Pfam" id="PF08170">
    <property type="entry name" value="POPLD"/>
    <property type="match status" value="1"/>
</dbReference>
<evidence type="ECO:0000250" key="1">
    <source>
        <dbReference type="UniProtKB" id="Q99575"/>
    </source>
</evidence>
<evidence type="ECO:0000256" key="2">
    <source>
        <dbReference type="SAM" id="MobiDB-lite"/>
    </source>
</evidence>
<evidence type="ECO:0000305" key="3"/>
<evidence type="ECO:0000312" key="4">
    <source>
        <dbReference type="WormBase" id="C05D11.9"/>
    </source>
</evidence>
<accession>Q11188</accession>
<keyword id="KW-0378">Hydrolase</keyword>
<keyword id="KW-0539">Nucleus</keyword>
<keyword id="KW-1185">Reference proteome</keyword>
<keyword id="KW-0694">RNA-binding</keyword>
<keyword id="KW-0819">tRNA processing</keyword>
<organism>
    <name type="scientific">Caenorhabditis elegans</name>
    <dbReference type="NCBI Taxonomy" id="6239"/>
    <lineage>
        <taxon>Eukaryota</taxon>
        <taxon>Metazoa</taxon>
        <taxon>Ecdysozoa</taxon>
        <taxon>Nematoda</taxon>
        <taxon>Chromadorea</taxon>
        <taxon>Rhabditida</taxon>
        <taxon>Rhabditina</taxon>
        <taxon>Rhabditomorpha</taxon>
        <taxon>Rhabditoidea</taxon>
        <taxon>Rhabditidae</taxon>
        <taxon>Peloderinae</taxon>
        <taxon>Caenorhabditis</taxon>
    </lineage>
</organism>